<organism>
    <name type="scientific">Capra hircus</name>
    <name type="common">Goat</name>
    <dbReference type="NCBI Taxonomy" id="9925"/>
    <lineage>
        <taxon>Eukaryota</taxon>
        <taxon>Metazoa</taxon>
        <taxon>Chordata</taxon>
        <taxon>Craniata</taxon>
        <taxon>Vertebrata</taxon>
        <taxon>Euteleostomi</taxon>
        <taxon>Mammalia</taxon>
        <taxon>Eutheria</taxon>
        <taxon>Laurasiatheria</taxon>
        <taxon>Artiodactyla</taxon>
        <taxon>Ruminantia</taxon>
        <taxon>Pecora</taxon>
        <taxon>Bovidae</taxon>
        <taxon>Caprinae</taxon>
        <taxon>Capra</taxon>
    </lineage>
</organism>
<protein>
    <recommendedName>
        <fullName>Interleukin-2</fullName>
        <shortName>IL-2</shortName>
    </recommendedName>
    <alternativeName>
        <fullName>T-cell growth factor</fullName>
        <shortName>TCGF</shortName>
    </alternativeName>
</protein>
<keyword id="KW-1064">Adaptive immunity</keyword>
<keyword id="KW-0202">Cytokine</keyword>
<keyword id="KW-1015">Disulfide bond</keyword>
<keyword id="KW-0325">Glycoprotein</keyword>
<keyword id="KW-0339">Growth factor</keyword>
<keyword id="KW-0391">Immunity</keyword>
<keyword id="KW-1185">Reference proteome</keyword>
<keyword id="KW-0964">Secreted</keyword>
<keyword id="KW-0732">Signal</keyword>
<name>IL2_CAPHI</name>
<accession>P36835</accession>
<accession>P79156</accession>
<evidence type="ECO:0000250" key="1"/>
<evidence type="ECO:0000250" key="2">
    <source>
        <dbReference type="UniProtKB" id="P60568"/>
    </source>
</evidence>
<evidence type="ECO:0000305" key="3"/>
<feature type="signal peptide" evidence="1">
    <location>
        <begin position="1"/>
        <end position="20"/>
    </location>
</feature>
<feature type="chain" id="PRO_0000015477" description="Interleukin-2">
    <location>
        <begin position="21"/>
        <end position="155"/>
    </location>
</feature>
<feature type="glycosylation site" description="O-linked (GalNAc...) threonine" evidence="1">
    <location>
        <position position="23"/>
    </location>
</feature>
<feature type="disulfide bond" evidence="1">
    <location>
        <begin position="79"/>
        <end position="127"/>
    </location>
</feature>
<feature type="sequence conflict" description="In Ref. 2; AAB38527." evidence="3" ref="2">
    <original>RMQ</original>
    <variation>QIP</variation>
    <location>
        <begin position="3"/>
        <end position="5"/>
    </location>
</feature>
<feature type="sequence conflict" description="In Ref. 2; AAB38527." evidence="3" ref="2">
    <original>P</original>
    <variation>T</variation>
    <location>
        <position position="22"/>
    </location>
</feature>
<feature type="sequence conflict" description="In Ref. 2; AAB38527." evidence="3" ref="2">
    <original>T</original>
    <variation>P</variation>
    <location>
        <position position="30"/>
    </location>
</feature>
<feature type="sequence conflict" description="In Ref. 2; AAB38527." evidence="3" ref="2">
    <original>L</original>
    <variation>P</variation>
    <location>
        <position position="51"/>
    </location>
</feature>
<feature type="sequence conflict" description="In Ref. 2; AAB38527." evidence="3" ref="2">
    <original>D</original>
    <variation>A</variation>
    <location>
        <position position="71"/>
    </location>
</feature>
<feature type="sequence conflict" description="In Ref. 2; AAB38527." evidence="3" ref="2">
    <original>D</original>
    <variation>E</variation>
    <location>
        <position position="89"/>
    </location>
</feature>
<feature type="sequence conflict" description="In Ref. 2; AAB38527." evidence="3" ref="2">
    <original>R</original>
    <variation>L</variation>
    <location>
        <position position="99"/>
    </location>
</feature>
<feature type="sequence conflict" description="In Ref. 2; AAB38527." evidence="3" ref="2">
    <original>YMASLKG</original>
    <variation>SMDNIKR</variation>
    <location>
        <begin position="107"/>
        <end position="113"/>
    </location>
</feature>
<feature type="sequence conflict" description="In Ref. 2; AAB38527." evidence="3" ref="2">
    <original>Q</original>
    <variation>L</variation>
    <location>
        <position position="140"/>
    </location>
</feature>
<feature type="sequence conflict" description="In Ref. 2; AAB38527." evidence="3" ref="2">
    <original>T</original>
    <variation>I</variation>
    <location>
        <position position="144"/>
    </location>
</feature>
<feature type="sequence conflict" description="In Ref. 2; AAB38527." evidence="3" ref="2">
    <original>L</original>
    <variation>M</variation>
    <location>
        <position position="154"/>
    </location>
</feature>
<gene>
    <name type="primary">IL2</name>
</gene>
<proteinExistence type="evidence at transcript level"/>
<dbReference type="EMBL" id="X76063">
    <property type="protein sequence ID" value="CAA53664.1"/>
    <property type="molecule type" value="mRNA"/>
</dbReference>
<dbReference type="EMBL" id="U34274">
    <property type="protein sequence ID" value="AAB38527.1"/>
    <property type="molecule type" value="mRNA"/>
</dbReference>
<dbReference type="PIR" id="S38662">
    <property type="entry name" value="S38662"/>
</dbReference>
<dbReference type="SMR" id="P36835"/>
<dbReference type="STRING" id="9925.ENSCHIP00000029633"/>
<dbReference type="GlyCosmos" id="P36835">
    <property type="glycosylation" value="1 site, No reported glycans"/>
</dbReference>
<dbReference type="Proteomes" id="UP000291000">
    <property type="component" value="Unassembled WGS sequence"/>
</dbReference>
<dbReference type="Proteomes" id="UP000694566">
    <property type="component" value="Unplaced"/>
</dbReference>
<dbReference type="GO" id="GO:0005615">
    <property type="term" value="C:extracellular space"/>
    <property type="evidence" value="ECO:0007669"/>
    <property type="project" value="UniProtKB-KW"/>
</dbReference>
<dbReference type="GO" id="GO:0005125">
    <property type="term" value="F:cytokine activity"/>
    <property type="evidence" value="ECO:0007669"/>
    <property type="project" value="UniProtKB-KW"/>
</dbReference>
<dbReference type="GO" id="GO:0008083">
    <property type="term" value="F:growth factor activity"/>
    <property type="evidence" value="ECO:0007669"/>
    <property type="project" value="UniProtKB-KW"/>
</dbReference>
<dbReference type="GO" id="GO:0005134">
    <property type="term" value="F:interleukin-2 receptor binding"/>
    <property type="evidence" value="ECO:0007669"/>
    <property type="project" value="InterPro"/>
</dbReference>
<dbReference type="GO" id="GO:0002250">
    <property type="term" value="P:adaptive immune response"/>
    <property type="evidence" value="ECO:0007669"/>
    <property type="project" value="UniProtKB-KW"/>
</dbReference>
<dbReference type="Gene3D" id="1.20.1250.10">
    <property type="match status" value="1"/>
</dbReference>
<dbReference type="InterPro" id="IPR009079">
    <property type="entry name" value="4_helix_cytokine-like_core"/>
</dbReference>
<dbReference type="InterPro" id="IPR000779">
    <property type="entry name" value="IL-2"/>
</dbReference>
<dbReference type="InterPro" id="IPR030477">
    <property type="entry name" value="IL-2_CS"/>
</dbReference>
<dbReference type="PANTHER" id="PTHR48487">
    <property type="entry name" value="INTERLEUKIN-2"/>
    <property type="match status" value="1"/>
</dbReference>
<dbReference type="PANTHER" id="PTHR48487:SF1">
    <property type="entry name" value="INTERLEUKIN-2"/>
    <property type="match status" value="1"/>
</dbReference>
<dbReference type="Pfam" id="PF00715">
    <property type="entry name" value="IL2"/>
    <property type="match status" value="1"/>
</dbReference>
<dbReference type="PRINTS" id="PR00265">
    <property type="entry name" value="INTERLEUKIN2"/>
</dbReference>
<dbReference type="SMART" id="SM00189">
    <property type="entry name" value="IL2"/>
    <property type="match status" value="1"/>
</dbReference>
<dbReference type="SUPFAM" id="SSF47266">
    <property type="entry name" value="4-helical cytokines"/>
    <property type="match status" value="1"/>
</dbReference>
<dbReference type="PROSITE" id="PS00424">
    <property type="entry name" value="INTERLEUKIN_2"/>
    <property type="match status" value="1"/>
</dbReference>
<sequence>MYRMQLLSCIALTLALVANGAPTSSSTGNTMKEVKSLLLDLQLLLEKVKNLENLKLSRMHTFNFYMPKVNDTELKHLKCLLEELKLLEDVLDLAPSKNRNTREIKDYMASLKGIVLELQGSETRFTCEYDDATVKAVEFQNKWTTFCQSIYSTLT</sequence>
<comment type="function">
    <text evidence="2">Cytokine produced by activated CD4-positive helper T-cells and to a lesser extend activated CD8-positive T-cells and natural killer (NK) cells that plays pivotal roles in the immune response and tolerance. Binds to a receptor complex composed of either the high-affinity trimeric IL-2R (IL2RA/CD25, IL2RB/CD122 and IL2RG/CD132) or the low-affinity dimeric IL-2R (IL2RB and IL2RG). Interaction with the receptor leads to oligomerization and conformation changes in the IL-2R subunits resulting in downstream signaling starting with phosphorylation of JAK1 and JAK3. In turn, JAK1 and JAK3 phosphorylate the receptor to form a docking site leading to the phosphorylation of several substrates including STAT5. This process leads to activation of several pathways including STAT, phosphoinositide-3-kinase/PI3K and mitogen-activated protein kinase/MAPK pathways. Functions as a T-cell growth factor and can increase NK-cell cytolytic activity as well. Promotes strong proliferation of activated B-cells and subsequently immunoglobulin production. Plays a pivotal role in regulating the adaptive immune system by controlling the survival and proliferation of regulatory T-cells, which are required for the maintenance of immune tolerance. Moreover, participates in the differentiation and homeostasis of effector T-cell subsets, including Th1, Th2, Th17 as well as memory CD8-positive T-cells.</text>
</comment>
<comment type="subcellular location">
    <subcellularLocation>
        <location>Secreted</location>
    </subcellularLocation>
</comment>
<comment type="similarity">
    <text evidence="3">Belongs to the IL-2 family.</text>
</comment>
<reference key="1">
    <citation type="submission" date="1993-11" db="EMBL/GenBank/DDBJ databases">
        <title>The molecular cloning and expression of caprine interleukin 2.</title>
        <authorList>
            <person name="Rimstad E."/>
        </authorList>
    </citation>
    <scope>NUCLEOTIDE SEQUENCE [MRNA]</scope>
    <source>
        <tissue>Blood</tissue>
    </source>
</reference>
<reference key="2">
    <citation type="submission" date="1996-12" db="EMBL/GenBank/DDBJ databases">
        <title>Nucleotide sequence of caprine interferon-gamma, interleukin-2 and interleukin-4 cDNAs.</title>
        <authorList>
            <person name="Beyer J.C."/>
            <person name="Cheevers W.P."/>
        </authorList>
    </citation>
    <scope>NUCLEOTIDE SEQUENCE [MRNA]</scope>
</reference>